<sequence>MRIIFWGTPEYSIASLDIFIKSKHEVIGVVSQPDKKRSRGNKLISSPVKSFAEQESIKIYTPVKIRDNIHFINELKSLSCDLFIVIAYGKILPKEILEIPKFGCWNAHASLLPRWRGAAPIQWSLIKGDKFTGVGIMKMNEGLDTGDLLLEEKIKIGNEDNLNTLSEKLSILSAKLFLKAASLLEENFYKNTKSQLTKQNSLGREITYARMIEKSDFRVDWGNQAIAISQKIKGLYPRANTIFRGKNLKILKIKVLSSDEIKNEKYLFMSDYSRPGIILAVIEDEGIIISTKTDPIILLEAKLEGKNISSKKQLIQQLKPSVGEYLSD</sequence>
<organism>
    <name type="scientific">Prochlorococcus marinus (strain AS9601)</name>
    <dbReference type="NCBI Taxonomy" id="146891"/>
    <lineage>
        <taxon>Bacteria</taxon>
        <taxon>Bacillati</taxon>
        <taxon>Cyanobacteriota</taxon>
        <taxon>Cyanophyceae</taxon>
        <taxon>Synechococcales</taxon>
        <taxon>Prochlorococcaceae</taxon>
        <taxon>Prochlorococcus</taxon>
    </lineage>
</organism>
<gene>
    <name evidence="1" type="primary">fmt</name>
    <name type="ordered locus">A9601_10281</name>
</gene>
<protein>
    <recommendedName>
        <fullName evidence="1">Methionyl-tRNA formyltransferase</fullName>
        <ecNumber evidence="1">2.1.2.9</ecNumber>
    </recommendedName>
</protein>
<evidence type="ECO:0000255" key="1">
    <source>
        <dbReference type="HAMAP-Rule" id="MF_00182"/>
    </source>
</evidence>
<feature type="chain" id="PRO_1000020126" description="Methionyl-tRNA formyltransferase">
    <location>
        <begin position="1"/>
        <end position="328"/>
    </location>
</feature>
<feature type="binding site" evidence="1">
    <location>
        <begin position="110"/>
        <end position="113"/>
    </location>
    <ligand>
        <name>(6S)-5,6,7,8-tetrahydrofolate</name>
        <dbReference type="ChEBI" id="CHEBI:57453"/>
    </ligand>
</feature>
<proteinExistence type="inferred from homology"/>
<keyword id="KW-0648">Protein biosynthesis</keyword>
<keyword id="KW-0808">Transferase</keyword>
<accession>A2BRA1</accession>
<name>FMT_PROMS</name>
<reference key="1">
    <citation type="journal article" date="2007" name="PLoS Genet.">
        <title>Patterns and implications of gene gain and loss in the evolution of Prochlorococcus.</title>
        <authorList>
            <person name="Kettler G.C."/>
            <person name="Martiny A.C."/>
            <person name="Huang K."/>
            <person name="Zucker J."/>
            <person name="Coleman M.L."/>
            <person name="Rodrigue S."/>
            <person name="Chen F."/>
            <person name="Lapidus A."/>
            <person name="Ferriera S."/>
            <person name="Johnson J."/>
            <person name="Steglich C."/>
            <person name="Church G.M."/>
            <person name="Richardson P."/>
            <person name="Chisholm S.W."/>
        </authorList>
    </citation>
    <scope>NUCLEOTIDE SEQUENCE [LARGE SCALE GENOMIC DNA]</scope>
    <source>
        <strain>AS9601</strain>
    </source>
</reference>
<dbReference type="EC" id="2.1.2.9" evidence="1"/>
<dbReference type="EMBL" id="CP000551">
    <property type="protein sequence ID" value="ABM70312.1"/>
    <property type="molecule type" value="Genomic_DNA"/>
</dbReference>
<dbReference type="RefSeq" id="WP_011818464.1">
    <property type="nucleotide sequence ID" value="NC_008816.1"/>
</dbReference>
<dbReference type="SMR" id="A2BRA1"/>
<dbReference type="STRING" id="146891.A9601_10281"/>
<dbReference type="KEGG" id="pmb:A9601_10281"/>
<dbReference type="eggNOG" id="COG0223">
    <property type="taxonomic scope" value="Bacteria"/>
</dbReference>
<dbReference type="HOGENOM" id="CLU_033347_1_1_3"/>
<dbReference type="OrthoDB" id="9802815at2"/>
<dbReference type="Proteomes" id="UP000002590">
    <property type="component" value="Chromosome"/>
</dbReference>
<dbReference type="GO" id="GO:0005829">
    <property type="term" value="C:cytosol"/>
    <property type="evidence" value="ECO:0007669"/>
    <property type="project" value="TreeGrafter"/>
</dbReference>
<dbReference type="GO" id="GO:0004479">
    <property type="term" value="F:methionyl-tRNA formyltransferase activity"/>
    <property type="evidence" value="ECO:0007669"/>
    <property type="project" value="UniProtKB-UniRule"/>
</dbReference>
<dbReference type="CDD" id="cd08646">
    <property type="entry name" value="FMT_core_Met-tRNA-FMT_N"/>
    <property type="match status" value="1"/>
</dbReference>
<dbReference type="Gene3D" id="3.40.50.12230">
    <property type="match status" value="1"/>
</dbReference>
<dbReference type="HAMAP" id="MF_00182">
    <property type="entry name" value="Formyl_trans"/>
    <property type="match status" value="1"/>
</dbReference>
<dbReference type="InterPro" id="IPR005794">
    <property type="entry name" value="Fmt"/>
</dbReference>
<dbReference type="InterPro" id="IPR005793">
    <property type="entry name" value="Formyl_trans_C"/>
</dbReference>
<dbReference type="InterPro" id="IPR002376">
    <property type="entry name" value="Formyl_transf_N"/>
</dbReference>
<dbReference type="InterPro" id="IPR036477">
    <property type="entry name" value="Formyl_transf_N_sf"/>
</dbReference>
<dbReference type="InterPro" id="IPR011034">
    <property type="entry name" value="Formyl_transferase-like_C_sf"/>
</dbReference>
<dbReference type="InterPro" id="IPR041711">
    <property type="entry name" value="Met-tRNA-FMT_N"/>
</dbReference>
<dbReference type="NCBIfam" id="TIGR00460">
    <property type="entry name" value="fmt"/>
    <property type="match status" value="1"/>
</dbReference>
<dbReference type="PANTHER" id="PTHR11138">
    <property type="entry name" value="METHIONYL-TRNA FORMYLTRANSFERASE"/>
    <property type="match status" value="1"/>
</dbReference>
<dbReference type="PANTHER" id="PTHR11138:SF5">
    <property type="entry name" value="METHIONYL-TRNA FORMYLTRANSFERASE, MITOCHONDRIAL"/>
    <property type="match status" value="1"/>
</dbReference>
<dbReference type="Pfam" id="PF02911">
    <property type="entry name" value="Formyl_trans_C"/>
    <property type="match status" value="1"/>
</dbReference>
<dbReference type="Pfam" id="PF00551">
    <property type="entry name" value="Formyl_trans_N"/>
    <property type="match status" value="1"/>
</dbReference>
<dbReference type="SUPFAM" id="SSF50486">
    <property type="entry name" value="FMT C-terminal domain-like"/>
    <property type="match status" value="1"/>
</dbReference>
<dbReference type="SUPFAM" id="SSF53328">
    <property type="entry name" value="Formyltransferase"/>
    <property type="match status" value="1"/>
</dbReference>
<comment type="function">
    <text evidence="1">Attaches a formyl group to the free amino group of methionyl-tRNA(fMet). The formyl group appears to play a dual role in the initiator identity of N-formylmethionyl-tRNA by promoting its recognition by IF2 and preventing the misappropriation of this tRNA by the elongation apparatus.</text>
</comment>
<comment type="catalytic activity">
    <reaction evidence="1">
        <text>L-methionyl-tRNA(fMet) + (6R)-10-formyltetrahydrofolate = N-formyl-L-methionyl-tRNA(fMet) + (6S)-5,6,7,8-tetrahydrofolate + H(+)</text>
        <dbReference type="Rhea" id="RHEA:24380"/>
        <dbReference type="Rhea" id="RHEA-COMP:9952"/>
        <dbReference type="Rhea" id="RHEA-COMP:9953"/>
        <dbReference type="ChEBI" id="CHEBI:15378"/>
        <dbReference type="ChEBI" id="CHEBI:57453"/>
        <dbReference type="ChEBI" id="CHEBI:78530"/>
        <dbReference type="ChEBI" id="CHEBI:78844"/>
        <dbReference type="ChEBI" id="CHEBI:195366"/>
        <dbReference type="EC" id="2.1.2.9"/>
    </reaction>
</comment>
<comment type="similarity">
    <text evidence="1">Belongs to the Fmt family.</text>
</comment>